<keyword id="KW-0002">3D-structure</keyword>
<keyword id="KW-0045">Antibiotic biosynthesis</keyword>
<keyword id="KW-0349">Heme</keyword>
<keyword id="KW-0408">Iron</keyword>
<keyword id="KW-0479">Metal-binding</keyword>
<keyword id="KW-0503">Monooxygenase</keyword>
<keyword id="KW-0560">Oxidoreductase</keyword>
<keyword id="KW-1185">Reference proteome</keyword>
<gene>
    <name type="primary">cyp28</name>
    <name type="synonym">cyp105d7</name>
    <name type="ordered locus">SAV_7469</name>
</gene>
<comment type="function">
    <text evidence="3">Catalyzes the conversion of 1-deoxypentalenic acid to pentalenic acid in the biosynthesis of neopentalenolactone antibiotic.</text>
</comment>
<comment type="catalytic activity">
    <reaction evidence="3">
        <text>1-deoxypentalenate + reduced 2[4Fe-4S]-[ferredoxin] + O2 + 2 H(+) = pentalenate + oxidized 2[4Fe-4S]-[ferredoxin] + H2O</text>
        <dbReference type="Rhea" id="RHEA:34499"/>
        <dbReference type="Rhea" id="RHEA-COMP:10002"/>
        <dbReference type="Rhea" id="RHEA-COMP:10004"/>
        <dbReference type="ChEBI" id="CHEBI:15377"/>
        <dbReference type="ChEBI" id="CHEBI:15378"/>
        <dbReference type="ChEBI" id="CHEBI:15379"/>
        <dbReference type="ChEBI" id="CHEBI:33722"/>
        <dbReference type="ChEBI" id="CHEBI:33723"/>
        <dbReference type="ChEBI" id="CHEBI:68649"/>
        <dbReference type="ChEBI" id="CHEBI:68650"/>
        <dbReference type="EC" id="1.14.15.11"/>
    </reaction>
</comment>
<comment type="cofactor">
    <cofactor evidence="1">
        <name>heme</name>
        <dbReference type="ChEBI" id="CHEBI:30413"/>
    </cofactor>
</comment>
<comment type="pathway">
    <text evidence="4">Antibiotic biosynthesis; neopentalenolactone biosynthesis.</text>
</comment>
<comment type="miscellaneous">
    <text evidence="6">S.avermitilis does not produce pentalenolactone itself in vivo but instead a group of new metabolites that are neopentalenolactone derivatives.</text>
</comment>
<comment type="similarity">
    <text evidence="5">Belongs to the cytochrome P450 family.</text>
</comment>
<organism>
    <name type="scientific">Streptomyces avermitilis (strain ATCC 31267 / DSM 46492 / JCM 5070 / NBRC 14893 / NCIMB 12804 / NRRL 8165 / MA-4680)</name>
    <dbReference type="NCBI Taxonomy" id="227882"/>
    <lineage>
        <taxon>Bacteria</taxon>
        <taxon>Bacillati</taxon>
        <taxon>Actinomycetota</taxon>
        <taxon>Actinomycetes</taxon>
        <taxon>Kitasatosporales</taxon>
        <taxon>Streptomycetaceae</taxon>
        <taxon>Streptomyces</taxon>
    </lineage>
</organism>
<protein>
    <recommendedName>
        <fullName>Pentalenic acid synthase</fullName>
        <ecNumber>1.14.15.11</ecNumber>
    </recommendedName>
</protein>
<dbReference type="EC" id="1.14.15.11"/>
<dbReference type="EMBL" id="BA000030">
    <property type="protein sequence ID" value="BAC75180.2"/>
    <property type="molecule type" value="Genomic_DNA"/>
</dbReference>
<dbReference type="RefSeq" id="WP_037650886.1">
    <property type="nucleotide sequence ID" value="NZ_JZJK01000065.1"/>
</dbReference>
<dbReference type="PDB" id="4UBS">
    <property type="method" value="X-ray"/>
    <property type="resolution" value="2.20 A"/>
    <property type="chains" value="A=10-402"/>
</dbReference>
<dbReference type="PDBsum" id="4UBS"/>
<dbReference type="SMR" id="Q825I8"/>
<dbReference type="GeneID" id="41544538"/>
<dbReference type="KEGG" id="sma:SAVERM_7469"/>
<dbReference type="eggNOG" id="COG2124">
    <property type="taxonomic scope" value="Bacteria"/>
</dbReference>
<dbReference type="HOGENOM" id="CLU_033716_1_1_11"/>
<dbReference type="BioCyc" id="MetaCyc:MONOMERMETA-16855"/>
<dbReference type="BRENDA" id="1.14.15.11">
    <property type="organism ID" value="5980"/>
</dbReference>
<dbReference type="UniPathway" id="UPA01021"/>
<dbReference type="EvolutionaryTrace" id="Q825I8"/>
<dbReference type="Proteomes" id="UP000000428">
    <property type="component" value="Chromosome"/>
</dbReference>
<dbReference type="GO" id="GO:0020037">
    <property type="term" value="F:heme binding"/>
    <property type="evidence" value="ECO:0007669"/>
    <property type="project" value="InterPro"/>
</dbReference>
<dbReference type="GO" id="GO:0005506">
    <property type="term" value="F:iron ion binding"/>
    <property type="evidence" value="ECO:0007669"/>
    <property type="project" value="InterPro"/>
</dbReference>
<dbReference type="GO" id="GO:0016713">
    <property type="term" value="F:oxidoreductase activity, acting on paired donors, with incorporation or reduction of molecular oxygen, reduced iron-sulfur protein as one donor, and incorporation of one atom of oxygen"/>
    <property type="evidence" value="ECO:0000314"/>
    <property type="project" value="UniProtKB"/>
</dbReference>
<dbReference type="GO" id="GO:0017000">
    <property type="term" value="P:antibiotic biosynthetic process"/>
    <property type="evidence" value="ECO:0000314"/>
    <property type="project" value="UniProtKB"/>
</dbReference>
<dbReference type="GO" id="GO:1901336">
    <property type="term" value="P:lactone biosynthetic process"/>
    <property type="evidence" value="ECO:0000314"/>
    <property type="project" value="UniProtKB"/>
</dbReference>
<dbReference type="CDD" id="cd11030">
    <property type="entry name" value="CYP105-like"/>
    <property type="match status" value="1"/>
</dbReference>
<dbReference type="FunFam" id="1.10.630.10:FF:000018">
    <property type="entry name" value="Cytochrome P450 monooxygenase"/>
    <property type="match status" value="1"/>
</dbReference>
<dbReference type="Gene3D" id="1.10.630.10">
    <property type="entry name" value="Cytochrome P450"/>
    <property type="match status" value="1"/>
</dbReference>
<dbReference type="InterPro" id="IPR001128">
    <property type="entry name" value="Cyt_P450"/>
</dbReference>
<dbReference type="InterPro" id="IPR002397">
    <property type="entry name" value="Cyt_P450_B"/>
</dbReference>
<dbReference type="InterPro" id="IPR017972">
    <property type="entry name" value="Cyt_P450_CS"/>
</dbReference>
<dbReference type="InterPro" id="IPR036396">
    <property type="entry name" value="Cyt_P450_sf"/>
</dbReference>
<dbReference type="PANTHER" id="PTHR46696:SF1">
    <property type="entry name" value="CYTOCHROME P450 YJIB-RELATED"/>
    <property type="match status" value="1"/>
</dbReference>
<dbReference type="PANTHER" id="PTHR46696">
    <property type="entry name" value="P450, PUTATIVE (EUROFUNG)-RELATED"/>
    <property type="match status" value="1"/>
</dbReference>
<dbReference type="Pfam" id="PF00067">
    <property type="entry name" value="p450"/>
    <property type="match status" value="1"/>
</dbReference>
<dbReference type="PRINTS" id="PR00359">
    <property type="entry name" value="BP450"/>
</dbReference>
<dbReference type="PRINTS" id="PR00385">
    <property type="entry name" value="P450"/>
</dbReference>
<dbReference type="SUPFAM" id="SSF48264">
    <property type="entry name" value="Cytochrome P450"/>
    <property type="match status" value="1"/>
</dbReference>
<dbReference type="PROSITE" id="PS00086">
    <property type="entry name" value="CYTOCHROME_P450"/>
    <property type="match status" value="1"/>
</dbReference>
<evidence type="ECO:0000250" key="1"/>
<evidence type="ECO:0000256" key="2">
    <source>
        <dbReference type="SAM" id="MobiDB-lite"/>
    </source>
</evidence>
<evidence type="ECO:0000269" key="3">
    <source>
    </source>
</evidence>
<evidence type="ECO:0000269" key="4">
    <source>
    </source>
</evidence>
<evidence type="ECO:0000305" key="5"/>
<evidence type="ECO:0000305" key="6">
    <source>
    </source>
</evidence>
<evidence type="ECO:0007829" key="7">
    <source>
        <dbReference type="PDB" id="4UBS"/>
    </source>
</evidence>
<feature type="chain" id="PRO_0000422009" description="Pentalenic acid synthase">
    <location>
        <begin position="1"/>
        <end position="402"/>
    </location>
</feature>
<feature type="region of interest" description="Disordered" evidence="2">
    <location>
        <begin position="1"/>
        <end position="28"/>
    </location>
</feature>
<feature type="binding site" description="axial binding residue" evidence="1">
    <location>
        <position position="351"/>
    </location>
    <ligand>
        <name>heme</name>
        <dbReference type="ChEBI" id="CHEBI:30413"/>
    </ligand>
    <ligandPart>
        <name>Fe</name>
        <dbReference type="ChEBI" id="CHEBI:18248"/>
    </ligandPart>
</feature>
<feature type="strand" evidence="7">
    <location>
        <begin position="12"/>
        <end position="14"/>
    </location>
</feature>
<feature type="helix" evidence="7">
    <location>
        <begin position="26"/>
        <end position="28"/>
    </location>
</feature>
<feature type="helix" evidence="7">
    <location>
        <begin position="29"/>
        <end position="33"/>
    </location>
</feature>
<feature type="strand" evidence="7">
    <location>
        <begin position="37"/>
        <end position="41"/>
    </location>
</feature>
<feature type="strand" evidence="7">
    <location>
        <begin position="47"/>
        <end position="51"/>
    </location>
</feature>
<feature type="helix" evidence="7">
    <location>
        <begin position="54"/>
        <end position="61"/>
    </location>
</feature>
<feature type="helix" evidence="7">
    <location>
        <begin position="80"/>
        <end position="85"/>
    </location>
</feature>
<feature type="turn" evidence="7">
    <location>
        <begin position="91"/>
        <end position="94"/>
    </location>
</feature>
<feature type="helix" evidence="7">
    <location>
        <begin position="99"/>
        <end position="107"/>
    </location>
</feature>
<feature type="helix" evidence="7">
    <location>
        <begin position="108"/>
        <end position="110"/>
    </location>
</feature>
<feature type="helix" evidence="7">
    <location>
        <begin position="113"/>
        <end position="137"/>
    </location>
</feature>
<feature type="helix" evidence="7">
    <location>
        <begin position="143"/>
        <end position="146"/>
    </location>
</feature>
<feature type="turn" evidence="7">
    <location>
        <begin position="147"/>
        <end position="149"/>
    </location>
</feature>
<feature type="helix" evidence="7">
    <location>
        <begin position="150"/>
        <end position="160"/>
    </location>
</feature>
<feature type="helix" evidence="7">
    <location>
        <begin position="164"/>
        <end position="166"/>
    </location>
</feature>
<feature type="helix" evidence="7">
    <location>
        <begin position="167"/>
        <end position="179"/>
    </location>
</feature>
<feature type="helix" evidence="7">
    <location>
        <begin position="183"/>
        <end position="206"/>
    </location>
</feature>
<feature type="helix" evidence="7">
    <location>
        <begin position="212"/>
        <end position="219"/>
    </location>
</feature>
<feature type="helix" evidence="7">
    <location>
        <begin position="221"/>
        <end position="223"/>
    </location>
</feature>
<feature type="helix" evidence="7">
    <location>
        <begin position="228"/>
        <end position="258"/>
    </location>
</feature>
<feature type="helix" evidence="7">
    <location>
        <begin position="261"/>
        <end position="269"/>
    </location>
</feature>
<feature type="helix" evidence="7">
    <location>
        <begin position="271"/>
        <end position="273"/>
    </location>
</feature>
<feature type="helix" evidence="7">
    <location>
        <begin position="274"/>
        <end position="285"/>
    </location>
</feature>
<feature type="strand" evidence="7">
    <location>
        <begin position="292"/>
        <end position="297"/>
    </location>
</feature>
<feature type="strand" evidence="7">
    <location>
        <begin position="299"/>
        <end position="301"/>
    </location>
</feature>
<feature type="strand" evidence="7">
    <location>
        <begin position="304"/>
        <end position="306"/>
    </location>
</feature>
<feature type="strand" evidence="7">
    <location>
        <begin position="311"/>
        <end position="314"/>
    </location>
</feature>
<feature type="helix" evidence="7">
    <location>
        <begin position="316"/>
        <end position="319"/>
    </location>
</feature>
<feature type="turn" evidence="7">
    <location>
        <begin position="323"/>
        <end position="325"/>
    </location>
</feature>
<feature type="strand" evidence="7">
    <location>
        <begin position="326"/>
        <end position="328"/>
    </location>
</feature>
<feature type="strand" evidence="7">
    <location>
        <begin position="334"/>
        <end position="336"/>
    </location>
</feature>
<feature type="helix" evidence="7">
    <location>
        <begin position="347"/>
        <end position="349"/>
    </location>
</feature>
<feature type="helix" evidence="7">
    <location>
        <begin position="354"/>
        <end position="371"/>
    </location>
</feature>
<feature type="strand" evidence="7">
    <location>
        <begin position="376"/>
        <end position="379"/>
    </location>
</feature>
<feature type="helix" evidence="7">
    <location>
        <begin position="381"/>
        <end position="383"/>
    </location>
</feature>
<feature type="strand" evidence="7">
    <location>
        <begin position="399"/>
        <end position="401"/>
    </location>
</feature>
<accession>Q825I8</accession>
<sequence length="402" mass="44113">MTEPGTSVSAPVAFPQDRTCPYDPPTAYDPLREGRPLSRVSLYDGRSVWVVTGHAAARALLSDQRLSSDRTLPRFPATTERFEAVRTRRVALLGVDDPEHRTQRRMLVPSFTLKRAAALRPRIQETVDGLLDAMEAQGPPAELVSAFALPLPSMVICALLGVPYADHDFFESQSRRLLRGPGIAEVQDARAQLDDYLYALIDRKRKEPGDGLLDDLIQEQLNRGTVDRAELVSLATLLLIAGHETTANMISLGTFTLLRHPEQLAELRAEPGLMPAAVEELLRFLSIADGLLRVATEDIEVAGTTIRADEGVVFATSVINRDAAGFAEPDALDWHRSARHHVAFGFGIHQCLGQNLARAEMEIALGTLFERLPGLRLAAPADEIPFKPGDTIQGMLELPVTW</sequence>
<proteinExistence type="evidence at protein level"/>
<name>CYP28_STRAW</name>
<reference key="1">
    <citation type="journal article" date="2001" name="Proc. Natl. Acad. Sci. U.S.A.">
        <title>Genome sequence of an industrial microorganism Streptomyces avermitilis: deducing the ability of producing secondary metabolites.</title>
        <authorList>
            <person name="Omura S."/>
            <person name="Ikeda H."/>
            <person name="Ishikawa J."/>
            <person name="Hanamoto A."/>
            <person name="Takahashi C."/>
            <person name="Shinose M."/>
            <person name="Takahashi Y."/>
            <person name="Horikawa H."/>
            <person name="Nakazawa H."/>
            <person name="Osonoe T."/>
            <person name="Kikuchi H."/>
            <person name="Shiba T."/>
            <person name="Sakaki Y."/>
            <person name="Hattori M."/>
        </authorList>
    </citation>
    <scope>NUCLEOTIDE SEQUENCE [LARGE SCALE GENOMIC DNA]</scope>
    <source>
        <strain>ATCC 31267 / DSM 46492 / JCM 5070 / NBRC 14893 / NCIMB 12804 / NRRL 8165 / MA-4680</strain>
    </source>
</reference>
<reference key="2">
    <citation type="journal article" date="2003" name="Nat. Biotechnol.">
        <title>Complete genome sequence and comparative analysis of the industrial microorganism Streptomyces avermitilis.</title>
        <authorList>
            <person name="Ikeda H."/>
            <person name="Ishikawa J."/>
            <person name="Hanamoto A."/>
            <person name="Shinose M."/>
            <person name="Kikuchi H."/>
            <person name="Shiba T."/>
            <person name="Sakaki Y."/>
            <person name="Hattori M."/>
            <person name="Omura S."/>
        </authorList>
    </citation>
    <scope>NUCLEOTIDE SEQUENCE [LARGE SCALE GENOMIC DNA]</scope>
    <source>
        <strain>ATCC 31267 / DSM 46492 / JCM 5070 / NBRC 14893 / NCIMB 12804 / NRRL 8165 / MA-4680</strain>
    </source>
</reference>
<reference key="3">
    <citation type="journal article" date="2011" name="Biochemistry">
        <title>Genome mining in Streptomyces. Elucidation of the role of Baeyer-Villiger monooxygenases and non-heme iron-dependent dehydrogenase/oxygenases in the final steps of the biosynthesis of pentalenolactone and neopentalenolactone.</title>
        <authorList>
            <person name="Seo M.J."/>
            <person name="Zhu D."/>
            <person name="Endo S."/>
            <person name="Ikeda H."/>
            <person name="Cane D.E."/>
        </authorList>
    </citation>
    <scope>PATHWAY</scope>
    <source>
        <strain>ATCC 31267 / DSM 46492 / JCM 5070 / NBRC 14893 / NCIMB 12804 / NRRL 8165 / MA-4680</strain>
    </source>
</reference>
<reference key="4">
    <citation type="journal article" date="2011" name="J. Antibiot.">
        <title>Pentalenic acid is a shunt metabolite in the biosynthesis of the pentalenolactone family of metabolites: hydroxylation of 1-deoxypentalenic acid mediated by CYP105D7 (SAV_7469) of Streptomyces avermitilis.</title>
        <authorList>
            <person name="Takamatsu S."/>
            <person name="Xu L.H."/>
            <person name="Fushinobu S."/>
            <person name="Shoun H."/>
            <person name="Komatsu M."/>
            <person name="Cane D.E."/>
            <person name="Ikeda H."/>
        </authorList>
    </citation>
    <scope>FUNCTION</scope>
    <scope>CATALYTIC ACTIVITY</scope>
    <source>
        <strain>ATCC 31267 / DSM 46492 / JCM 5070 / NBRC 14893 / NCIMB 12804 / NRRL 8165 / MA-4680</strain>
    </source>
</reference>